<proteinExistence type="inferred from homology"/>
<feature type="chain" id="PRO_1000073531" description="UPF0297 protein lhv_0439">
    <location>
        <begin position="1"/>
        <end position="85"/>
    </location>
</feature>
<organism>
    <name type="scientific">Lactobacillus helveticus (strain DPC 4571)</name>
    <dbReference type="NCBI Taxonomy" id="405566"/>
    <lineage>
        <taxon>Bacteria</taxon>
        <taxon>Bacillati</taxon>
        <taxon>Bacillota</taxon>
        <taxon>Bacilli</taxon>
        <taxon>Lactobacillales</taxon>
        <taxon>Lactobacillaceae</taxon>
        <taxon>Lactobacillus</taxon>
    </lineage>
</organism>
<name>Y439_LACH4</name>
<evidence type="ECO:0000255" key="1">
    <source>
        <dbReference type="HAMAP-Rule" id="MF_01507"/>
    </source>
</evidence>
<gene>
    <name type="ordered locus">lhv_0439</name>
</gene>
<comment type="similarity">
    <text evidence="1">Belongs to the UPF0297 family.</text>
</comment>
<protein>
    <recommendedName>
        <fullName evidence="1">UPF0297 protein lhv_0439</fullName>
    </recommendedName>
</protein>
<accession>A8YTJ1</accession>
<dbReference type="EMBL" id="CP000517">
    <property type="protein sequence ID" value="ABX26647.1"/>
    <property type="molecule type" value="Genomic_DNA"/>
</dbReference>
<dbReference type="RefSeq" id="WP_003627753.1">
    <property type="nucleotide sequence ID" value="NC_010080.1"/>
</dbReference>
<dbReference type="SMR" id="A8YTJ1"/>
<dbReference type="KEGG" id="lhe:lhv_0439"/>
<dbReference type="eggNOG" id="COG4472">
    <property type="taxonomic scope" value="Bacteria"/>
</dbReference>
<dbReference type="HOGENOM" id="CLU_162466_0_0_9"/>
<dbReference type="Proteomes" id="UP000000790">
    <property type="component" value="Chromosome"/>
</dbReference>
<dbReference type="HAMAP" id="MF_01507">
    <property type="entry name" value="UPF0297"/>
    <property type="match status" value="1"/>
</dbReference>
<dbReference type="InterPro" id="IPR009309">
    <property type="entry name" value="IreB"/>
</dbReference>
<dbReference type="NCBIfam" id="NF003997">
    <property type="entry name" value="PRK05473.1"/>
    <property type="match status" value="1"/>
</dbReference>
<dbReference type="PANTHER" id="PTHR40067">
    <property type="entry name" value="UPF0297 PROTEIN YRZL"/>
    <property type="match status" value="1"/>
</dbReference>
<dbReference type="PANTHER" id="PTHR40067:SF1">
    <property type="entry name" value="UPF0297 PROTEIN YRZL"/>
    <property type="match status" value="1"/>
</dbReference>
<dbReference type="Pfam" id="PF06135">
    <property type="entry name" value="IreB"/>
    <property type="match status" value="1"/>
</dbReference>
<dbReference type="PIRSF" id="PIRSF037258">
    <property type="entry name" value="DUF965_bac"/>
    <property type="match status" value="1"/>
</dbReference>
<sequence>MSSLDKTMHFDFNQNKGKNVYDTLQDVYNALEEKGYNPVNQIVGYLLSGDPAYIPRHNDARNLILKHERDEIIEELVKSYLGKNK</sequence>
<reference key="1">
    <citation type="journal article" date="2008" name="J. Bacteriol.">
        <title>Genome sequence of Lactobacillus helveticus: an organism distinguished by selective gene loss and IS element expansion.</title>
        <authorList>
            <person name="Callanan M."/>
            <person name="Kaleta P."/>
            <person name="O'Callaghan J."/>
            <person name="O'Sullivan O."/>
            <person name="Jordan K."/>
            <person name="McAuliffe O."/>
            <person name="Sangrador-Vegas A."/>
            <person name="Slattery L."/>
            <person name="Fitzgerald G.F."/>
            <person name="Beresford T."/>
            <person name="Ross R.P."/>
        </authorList>
    </citation>
    <scope>NUCLEOTIDE SEQUENCE [LARGE SCALE GENOMIC DNA]</scope>
    <source>
        <strain>DPC 4571</strain>
    </source>
</reference>